<proteinExistence type="inferred from homology"/>
<accession>Q7VBH4</accession>
<feature type="chain" id="PRO_0000141173" description="Ribose-phosphate pyrophosphokinase">
    <location>
        <begin position="1"/>
        <end position="327"/>
    </location>
</feature>
<feature type="active site" evidence="1">
    <location>
        <position position="207"/>
    </location>
</feature>
<feature type="binding site" evidence="1">
    <location>
        <begin position="51"/>
        <end position="53"/>
    </location>
    <ligand>
        <name>ATP</name>
        <dbReference type="ChEBI" id="CHEBI:30616"/>
    </ligand>
</feature>
<feature type="binding site" evidence="1">
    <location>
        <position position="144"/>
    </location>
    <ligand>
        <name>Mg(2+)</name>
        <dbReference type="ChEBI" id="CHEBI:18420"/>
        <label>1</label>
    </ligand>
</feature>
<feature type="binding site" evidence="1">
    <location>
        <position position="183"/>
    </location>
    <ligand>
        <name>Mg(2+)</name>
        <dbReference type="ChEBI" id="CHEBI:18420"/>
        <label>2</label>
    </ligand>
</feature>
<feature type="binding site" evidence="1">
    <location>
        <position position="209"/>
    </location>
    <ligand>
        <name>D-ribose 5-phosphate</name>
        <dbReference type="ChEBI" id="CHEBI:78346"/>
    </ligand>
</feature>
<feature type="binding site" evidence="1">
    <location>
        <position position="233"/>
    </location>
    <ligand>
        <name>D-ribose 5-phosphate</name>
        <dbReference type="ChEBI" id="CHEBI:78346"/>
    </ligand>
</feature>
<feature type="binding site" evidence="1">
    <location>
        <begin position="237"/>
        <end position="241"/>
    </location>
    <ligand>
        <name>D-ribose 5-phosphate</name>
        <dbReference type="ChEBI" id="CHEBI:78346"/>
    </ligand>
</feature>
<sequence length="327" mass="35412">MTAATAQNIKSSLNTDRLKLISGTSNPILAKEISSYIGIEDVPVVSKRFADGELYVQIQQSIRGCDVFLIQPTCAPVNDSLMELMIMVDACKRASARQVTAVIPYFGYARADRKTAGRESITAKLTANLLVSSGVDRVLAMDLHSAQIQGYFDIPCDHIYGSPVLIDYLSTKNLDEIVVVSPDVGGVARARAFAKQMKDSPLAIIDKRRAAHNVAQSLTVIGDVANKTAILIDDMIDTGGTICAGAELLRKEGAKRVIACASHAVFSPPAYSRLSADDLFEEVVVTNSIPVPTSQYFEQLKVLSVANMLGEAIWRVHEESSISSMFR</sequence>
<gene>
    <name evidence="1" type="primary">prs</name>
    <name type="synonym">prsA</name>
    <name type="ordered locus">Pro_1118</name>
</gene>
<protein>
    <recommendedName>
        <fullName evidence="1">Ribose-phosphate pyrophosphokinase</fullName>
        <shortName evidence="1">RPPK</shortName>
        <ecNumber evidence="1">2.7.6.1</ecNumber>
    </recommendedName>
    <alternativeName>
        <fullName evidence="1">5-phospho-D-ribosyl alpha-1-diphosphate synthase</fullName>
    </alternativeName>
    <alternativeName>
        <fullName evidence="1">Phosphoribosyl diphosphate synthase</fullName>
    </alternativeName>
    <alternativeName>
        <fullName evidence="1">Phosphoribosyl pyrophosphate synthase</fullName>
        <shortName evidence="1">P-Rib-PP synthase</shortName>
        <shortName evidence="1">PRPP synthase</shortName>
        <shortName evidence="1">PRPPase</shortName>
    </alternativeName>
</protein>
<organism>
    <name type="scientific">Prochlorococcus marinus (strain SARG / CCMP1375 / SS120)</name>
    <dbReference type="NCBI Taxonomy" id="167539"/>
    <lineage>
        <taxon>Bacteria</taxon>
        <taxon>Bacillati</taxon>
        <taxon>Cyanobacteriota</taxon>
        <taxon>Cyanophyceae</taxon>
        <taxon>Synechococcales</taxon>
        <taxon>Prochlorococcaceae</taxon>
        <taxon>Prochlorococcus</taxon>
    </lineage>
</organism>
<keyword id="KW-0067">ATP-binding</keyword>
<keyword id="KW-0963">Cytoplasm</keyword>
<keyword id="KW-0418">Kinase</keyword>
<keyword id="KW-0460">Magnesium</keyword>
<keyword id="KW-0479">Metal-binding</keyword>
<keyword id="KW-0545">Nucleotide biosynthesis</keyword>
<keyword id="KW-0547">Nucleotide-binding</keyword>
<keyword id="KW-1185">Reference proteome</keyword>
<keyword id="KW-0808">Transferase</keyword>
<evidence type="ECO:0000255" key="1">
    <source>
        <dbReference type="HAMAP-Rule" id="MF_00583"/>
    </source>
</evidence>
<reference key="1">
    <citation type="journal article" date="2003" name="Proc. Natl. Acad. Sci. U.S.A.">
        <title>Genome sequence of the cyanobacterium Prochlorococcus marinus SS120, a nearly minimal oxyphototrophic genome.</title>
        <authorList>
            <person name="Dufresne A."/>
            <person name="Salanoubat M."/>
            <person name="Partensky F."/>
            <person name="Artiguenave F."/>
            <person name="Axmann I.M."/>
            <person name="Barbe V."/>
            <person name="Duprat S."/>
            <person name="Galperin M.Y."/>
            <person name="Koonin E.V."/>
            <person name="Le Gall F."/>
            <person name="Makarova K.S."/>
            <person name="Ostrowski M."/>
            <person name="Oztas S."/>
            <person name="Robert C."/>
            <person name="Rogozin I.B."/>
            <person name="Scanlan D.J."/>
            <person name="Tandeau de Marsac N."/>
            <person name="Weissenbach J."/>
            <person name="Wincker P."/>
            <person name="Wolf Y.I."/>
            <person name="Hess W.R."/>
        </authorList>
    </citation>
    <scope>NUCLEOTIDE SEQUENCE [LARGE SCALE GENOMIC DNA]</scope>
    <source>
        <strain>SARG / CCMP1375 / SS120</strain>
    </source>
</reference>
<comment type="function">
    <text evidence="1">Involved in the biosynthesis of the central metabolite phospho-alpha-D-ribosyl-1-pyrophosphate (PRPP) via the transfer of pyrophosphoryl group from ATP to 1-hydroxyl of ribose-5-phosphate (Rib-5-P).</text>
</comment>
<comment type="catalytic activity">
    <reaction evidence="1">
        <text>D-ribose 5-phosphate + ATP = 5-phospho-alpha-D-ribose 1-diphosphate + AMP + H(+)</text>
        <dbReference type="Rhea" id="RHEA:15609"/>
        <dbReference type="ChEBI" id="CHEBI:15378"/>
        <dbReference type="ChEBI" id="CHEBI:30616"/>
        <dbReference type="ChEBI" id="CHEBI:58017"/>
        <dbReference type="ChEBI" id="CHEBI:78346"/>
        <dbReference type="ChEBI" id="CHEBI:456215"/>
        <dbReference type="EC" id="2.7.6.1"/>
    </reaction>
</comment>
<comment type="cofactor">
    <cofactor evidence="1">
        <name>Mg(2+)</name>
        <dbReference type="ChEBI" id="CHEBI:18420"/>
    </cofactor>
    <text evidence="1">Binds 2 Mg(2+) ions per subunit.</text>
</comment>
<comment type="pathway">
    <text evidence="1">Metabolic intermediate biosynthesis; 5-phospho-alpha-D-ribose 1-diphosphate biosynthesis; 5-phospho-alpha-D-ribose 1-diphosphate from D-ribose 5-phosphate (route I): step 1/1.</text>
</comment>
<comment type="subunit">
    <text evidence="1">Homohexamer.</text>
</comment>
<comment type="subcellular location">
    <subcellularLocation>
        <location evidence="1">Cytoplasm</location>
    </subcellularLocation>
</comment>
<comment type="similarity">
    <text evidence="1">Belongs to the ribose-phosphate pyrophosphokinase family. Class I subfamily.</text>
</comment>
<name>KPRS_PROMA</name>
<dbReference type="EC" id="2.7.6.1" evidence="1"/>
<dbReference type="EMBL" id="AE017126">
    <property type="protein sequence ID" value="AAQ00163.1"/>
    <property type="molecule type" value="Genomic_DNA"/>
</dbReference>
<dbReference type="RefSeq" id="NP_875510.1">
    <property type="nucleotide sequence ID" value="NC_005042.1"/>
</dbReference>
<dbReference type="SMR" id="Q7VBH4"/>
<dbReference type="STRING" id="167539.Pro_1118"/>
<dbReference type="EnsemblBacteria" id="AAQ00163">
    <property type="protein sequence ID" value="AAQ00163"/>
    <property type="gene ID" value="Pro_1118"/>
</dbReference>
<dbReference type="KEGG" id="pma:Pro_1118"/>
<dbReference type="PATRIC" id="fig|167539.5.peg.1170"/>
<dbReference type="eggNOG" id="COG0462">
    <property type="taxonomic scope" value="Bacteria"/>
</dbReference>
<dbReference type="HOGENOM" id="CLU_033546_7_0_3"/>
<dbReference type="OrthoDB" id="9777067at2"/>
<dbReference type="UniPathway" id="UPA00087">
    <property type="reaction ID" value="UER00172"/>
</dbReference>
<dbReference type="Proteomes" id="UP000001420">
    <property type="component" value="Chromosome"/>
</dbReference>
<dbReference type="GO" id="GO:0005737">
    <property type="term" value="C:cytoplasm"/>
    <property type="evidence" value="ECO:0007669"/>
    <property type="project" value="UniProtKB-SubCell"/>
</dbReference>
<dbReference type="GO" id="GO:0002189">
    <property type="term" value="C:ribose phosphate diphosphokinase complex"/>
    <property type="evidence" value="ECO:0007669"/>
    <property type="project" value="TreeGrafter"/>
</dbReference>
<dbReference type="GO" id="GO:0005524">
    <property type="term" value="F:ATP binding"/>
    <property type="evidence" value="ECO:0007669"/>
    <property type="project" value="UniProtKB-KW"/>
</dbReference>
<dbReference type="GO" id="GO:0016301">
    <property type="term" value="F:kinase activity"/>
    <property type="evidence" value="ECO:0007669"/>
    <property type="project" value="UniProtKB-KW"/>
</dbReference>
<dbReference type="GO" id="GO:0000287">
    <property type="term" value="F:magnesium ion binding"/>
    <property type="evidence" value="ECO:0007669"/>
    <property type="project" value="UniProtKB-UniRule"/>
</dbReference>
<dbReference type="GO" id="GO:0004749">
    <property type="term" value="F:ribose phosphate diphosphokinase activity"/>
    <property type="evidence" value="ECO:0007669"/>
    <property type="project" value="UniProtKB-UniRule"/>
</dbReference>
<dbReference type="GO" id="GO:0006015">
    <property type="term" value="P:5-phosphoribose 1-diphosphate biosynthetic process"/>
    <property type="evidence" value="ECO:0007669"/>
    <property type="project" value="UniProtKB-UniRule"/>
</dbReference>
<dbReference type="GO" id="GO:0006164">
    <property type="term" value="P:purine nucleotide biosynthetic process"/>
    <property type="evidence" value="ECO:0007669"/>
    <property type="project" value="TreeGrafter"/>
</dbReference>
<dbReference type="GO" id="GO:0009156">
    <property type="term" value="P:ribonucleoside monophosphate biosynthetic process"/>
    <property type="evidence" value="ECO:0007669"/>
    <property type="project" value="InterPro"/>
</dbReference>
<dbReference type="CDD" id="cd06223">
    <property type="entry name" value="PRTases_typeI"/>
    <property type="match status" value="1"/>
</dbReference>
<dbReference type="FunFam" id="3.40.50.2020:FF:000002">
    <property type="entry name" value="Ribose-phosphate pyrophosphokinase"/>
    <property type="match status" value="1"/>
</dbReference>
<dbReference type="FunFam" id="3.40.50.2020:FF:000014">
    <property type="entry name" value="Ribose-phosphate pyrophosphokinase 1"/>
    <property type="match status" value="1"/>
</dbReference>
<dbReference type="Gene3D" id="3.40.50.2020">
    <property type="match status" value="2"/>
</dbReference>
<dbReference type="HAMAP" id="MF_00583_B">
    <property type="entry name" value="RibP_PPkinase_B"/>
    <property type="match status" value="1"/>
</dbReference>
<dbReference type="InterPro" id="IPR000842">
    <property type="entry name" value="PRib_PP_synth_CS"/>
</dbReference>
<dbReference type="InterPro" id="IPR029099">
    <property type="entry name" value="Pribosyltran_N"/>
</dbReference>
<dbReference type="InterPro" id="IPR000836">
    <property type="entry name" value="PRibTrfase_dom"/>
</dbReference>
<dbReference type="InterPro" id="IPR029057">
    <property type="entry name" value="PRTase-like"/>
</dbReference>
<dbReference type="InterPro" id="IPR005946">
    <property type="entry name" value="Rib-P_diPkinase"/>
</dbReference>
<dbReference type="InterPro" id="IPR037515">
    <property type="entry name" value="Rib-P_diPkinase_bac"/>
</dbReference>
<dbReference type="NCBIfam" id="NF002320">
    <property type="entry name" value="PRK01259.1"/>
    <property type="match status" value="1"/>
</dbReference>
<dbReference type="NCBIfam" id="NF002758">
    <property type="entry name" value="PRK02812.1"/>
    <property type="match status" value="1"/>
</dbReference>
<dbReference type="NCBIfam" id="TIGR01251">
    <property type="entry name" value="ribP_PPkin"/>
    <property type="match status" value="1"/>
</dbReference>
<dbReference type="PANTHER" id="PTHR10210">
    <property type="entry name" value="RIBOSE-PHOSPHATE DIPHOSPHOKINASE FAMILY MEMBER"/>
    <property type="match status" value="1"/>
</dbReference>
<dbReference type="PANTHER" id="PTHR10210:SF41">
    <property type="entry name" value="RIBOSE-PHOSPHATE PYROPHOSPHOKINASE 1, CHLOROPLASTIC"/>
    <property type="match status" value="1"/>
</dbReference>
<dbReference type="Pfam" id="PF14572">
    <property type="entry name" value="Pribosyl_synth"/>
    <property type="match status" value="1"/>
</dbReference>
<dbReference type="Pfam" id="PF13793">
    <property type="entry name" value="Pribosyltran_N"/>
    <property type="match status" value="1"/>
</dbReference>
<dbReference type="SMART" id="SM01400">
    <property type="entry name" value="Pribosyltran_N"/>
    <property type="match status" value="1"/>
</dbReference>
<dbReference type="SUPFAM" id="SSF53271">
    <property type="entry name" value="PRTase-like"/>
    <property type="match status" value="1"/>
</dbReference>
<dbReference type="PROSITE" id="PS00114">
    <property type="entry name" value="PRPP_SYNTHASE"/>
    <property type="match status" value="1"/>
</dbReference>